<evidence type="ECO:0000255" key="1">
    <source>
        <dbReference type="HAMAP-Rule" id="MF_01382"/>
    </source>
</evidence>
<evidence type="ECO:0000256" key="2">
    <source>
        <dbReference type="SAM" id="MobiDB-lite"/>
    </source>
</evidence>
<reference key="1">
    <citation type="journal article" date="2008" name="Infect. Immun.">
        <title>Genomic comparison of virulent Rickettsia rickettsii Sheila Smith and avirulent Rickettsia rickettsii Iowa.</title>
        <authorList>
            <person name="Ellison D.W."/>
            <person name="Clark T.R."/>
            <person name="Sturdevant D.E."/>
            <person name="Virtaneva K."/>
            <person name="Porcella S.F."/>
            <person name="Hackstadt T."/>
        </authorList>
    </citation>
    <scope>NUCLEOTIDE SEQUENCE [LARGE SCALE GENOMIC DNA]</scope>
    <source>
        <strain>Iowa</strain>
    </source>
</reference>
<name>SECA_RICRO</name>
<keyword id="KW-0067">ATP-binding</keyword>
<keyword id="KW-0997">Cell inner membrane</keyword>
<keyword id="KW-1003">Cell membrane</keyword>
<keyword id="KW-0963">Cytoplasm</keyword>
<keyword id="KW-0472">Membrane</keyword>
<keyword id="KW-0479">Metal-binding</keyword>
<keyword id="KW-0547">Nucleotide-binding</keyword>
<keyword id="KW-0653">Protein transport</keyword>
<keyword id="KW-1278">Translocase</keyword>
<keyword id="KW-0811">Translocation</keyword>
<keyword id="KW-0813">Transport</keyword>
<keyword id="KW-0862">Zinc</keyword>
<gene>
    <name evidence="1" type="primary">secA</name>
    <name type="ordered locus">RrIowa_1045</name>
</gene>
<sequence>MLSILKKLFGTANDRTVKKLFSEITKINSLEPAIQKLSDEELKNKTVEFKEKLKNGATLDDIVYEAFAVVREAAKRVCGMRHFDVQLIGGLILHRGMITEMRTGEGKTLVATLPAYLNALTGKGVHVVTVNDYLARRDSAAMGKIYNFLGLSVGCIVGGMPDEVKRAAYNADITHATNNELGFDYLRDNMKYSLQERVLRPFNFAIIDEVDSILIDEARTPLVISGPVNDNAELYGKIDKIVRLLNASDFEKDEKLKTINLTETGITHIESLLSKENIIKPDTSLYDFENLTLVHYINQALRAHNMFTVNVDYLVREGKVMIIDEFTGRVMEGRRYSEGLHQALEAKENVKIQNENQTLASITFQNYFRNYPKLSGMTGTAMTEAPELKDIYNLDVVAVPTHNKVTRLDLDDEIYGSKKEKYDAILKLIRDCYDRGQPILVGTISIEKSEELSSVLNKENIPHKVLNAKFHEQEAFIIAQAGRFKAVTIATNMAGRGTDIMLGGNPEMLIEQLDKEHNYEAKIAEIKAQIAEEKKQVIEAGGLFVIGTERHESRRIDNQLRGRSGRQGDPGKTKFFLSLDDDLMRIFASDRISGVLRTLGLKDGEAIHHPMISRSLEKAQQKVEGHNYEMRKNLLRFDDVMNDQRKIIYEQRTEIIKSKDSHGFLNSTTEELAKKIVLTFMPVGSYREDWDIENLSVELHRVFSIKFDHNVVSKNDVTEEEITKTVIQMAHDIYKSKEEAYSSELMHNAVKYILLTTLDQVWKDHLYSLDHLRQGISLRAYGQKDPLSEYKREAFNLFEQMLNNLKELFIQTVYHFHIDLKNVQKEDVSLEYKKLQKNMCESREDPAFSKYNAGSSLETDLKPVVSRIDPKDRNPDDPTSWGRVSRNELCPCGSGKKYKYCHGANE</sequence>
<feature type="chain" id="PRO_1000087328" description="Protein translocase subunit SecA">
    <location>
        <begin position="1"/>
        <end position="906"/>
    </location>
</feature>
<feature type="region of interest" description="Disordered" evidence="2">
    <location>
        <begin position="863"/>
        <end position="887"/>
    </location>
</feature>
<feature type="binding site" evidence="1">
    <location>
        <position position="86"/>
    </location>
    <ligand>
        <name>ATP</name>
        <dbReference type="ChEBI" id="CHEBI:30616"/>
    </ligand>
</feature>
<feature type="binding site" evidence="1">
    <location>
        <begin position="104"/>
        <end position="108"/>
    </location>
    <ligand>
        <name>ATP</name>
        <dbReference type="ChEBI" id="CHEBI:30616"/>
    </ligand>
</feature>
<feature type="binding site" evidence="1">
    <location>
        <position position="499"/>
    </location>
    <ligand>
        <name>ATP</name>
        <dbReference type="ChEBI" id="CHEBI:30616"/>
    </ligand>
</feature>
<feature type="binding site" evidence="1">
    <location>
        <position position="890"/>
    </location>
    <ligand>
        <name>Zn(2+)</name>
        <dbReference type="ChEBI" id="CHEBI:29105"/>
    </ligand>
</feature>
<feature type="binding site" evidence="1">
    <location>
        <position position="892"/>
    </location>
    <ligand>
        <name>Zn(2+)</name>
        <dbReference type="ChEBI" id="CHEBI:29105"/>
    </ligand>
</feature>
<feature type="binding site" evidence="1">
    <location>
        <position position="901"/>
    </location>
    <ligand>
        <name>Zn(2+)</name>
        <dbReference type="ChEBI" id="CHEBI:29105"/>
    </ligand>
</feature>
<feature type="binding site" evidence="1">
    <location>
        <position position="902"/>
    </location>
    <ligand>
        <name>Zn(2+)</name>
        <dbReference type="ChEBI" id="CHEBI:29105"/>
    </ligand>
</feature>
<organism>
    <name type="scientific">Rickettsia rickettsii (strain Iowa)</name>
    <dbReference type="NCBI Taxonomy" id="452659"/>
    <lineage>
        <taxon>Bacteria</taxon>
        <taxon>Pseudomonadati</taxon>
        <taxon>Pseudomonadota</taxon>
        <taxon>Alphaproteobacteria</taxon>
        <taxon>Rickettsiales</taxon>
        <taxon>Rickettsiaceae</taxon>
        <taxon>Rickettsieae</taxon>
        <taxon>Rickettsia</taxon>
        <taxon>spotted fever group</taxon>
    </lineage>
</organism>
<dbReference type="EC" id="7.4.2.8" evidence="1"/>
<dbReference type="EMBL" id="CP000766">
    <property type="protein sequence ID" value="ABY72847.1"/>
    <property type="molecule type" value="Genomic_DNA"/>
</dbReference>
<dbReference type="RefSeq" id="WP_012151042.1">
    <property type="nucleotide sequence ID" value="NC_010263.3"/>
</dbReference>
<dbReference type="SMR" id="B0BYC1"/>
<dbReference type="GeneID" id="79937562"/>
<dbReference type="KEGG" id="rrj:RrIowa_1045"/>
<dbReference type="eggNOG" id="COG0653">
    <property type="taxonomic scope" value="Bacteria"/>
</dbReference>
<dbReference type="HOGENOM" id="CLU_005314_3_0_5"/>
<dbReference type="Proteomes" id="UP000000796">
    <property type="component" value="Chromosome"/>
</dbReference>
<dbReference type="GO" id="GO:0031522">
    <property type="term" value="C:cell envelope Sec protein transport complex"/>
    <property type="evidence" value="ECO:0007669"/>
    <property type="project" value="TreeGrafter"/>
</dbReference>
<dbReference type="GO" id="GO:0005829">
    <property type="term" value="C:cytosol"/>
    <property type="evidence" value="ECO:0007669"/>
    <property type="project" value="TreeGrafter"/>
</dbReference>
<dbReference type="GO" id="GO:0005886">
    <property type="term" value="C:plasma membrane"/>
    <property type="evidence" value="ECO:0007669"/>
    <property type="project" value="UniProtKB-SubCell"/>
</dbReference>
<dbReference type="GO" id="GO:0005524">
    <property type="term" value="F:ATP binding"/>
    <property type="evidence" value="ECO:0007669"/>
    <property type="project" value="UniProtKB-UniRule"/>
</dbReference>
<dbReference type="GO" id="GO:0046872">
    <property type="term" value="F:metal ion binding"/>
    <property type="evidence" value="ECO:0007669"/>
    <property type="project" value="UniProtKB-KW"/>
</dbReference>
<dbReference type="GO" id="GO:0008564">
    <property type="term" value="F:protein-exporting ATPase activity"/>
    <property type="evidence" value="ECO:0007669"/>
    <property type="project" value="UniProtKB-EC"/>
</dbReference>
<dbReference type="GO" id="GO:0065002">
    <property type="term" value="P:intracellular protein transmembrane transport"/>
    <property type="evidence" value="ECO:0007669"/>
    <property type="project" value="UniProtKB-UniRule"/>
</dbReference>
<dbReference type="GO" id="GO:0017038">
    <property type="term" value="P:protein import"/>
    <property type="evidence" value="ECO:0007669"/>
    <property type="project" value="InterPro"/>
</dbReference>
<dbReference type="GO" id="GO:0006605">
    <property type="term" value="P:protein targeting"/>
    <property type="evidence" value="ECO:0007669"/>
    <property type="project" value="UniProtKB-UniRule"/>
</dbReference>
<dbReference type="GO" id="GO:0043952">
    <property type="term" value="P:protein transport by the Sec complex"/>
    <property type="evidence" value="ECO:0007669"/>
    <property type="project" value="TreeGrafter"/>
</dbReference>
<dbReference type="CDD" id="cd17928">
    <property type="entry name" value="DEXDc_SecA"/>
    <property type="match status" value="1"/>
</dbReference>
<dbReference type="CDD" id="cd18803">
    <property type="entry name" value="SF2_C_secA"/>
    <property type="match status" value="1"/>
</dbReference>
<dbReference type="FunFam" id="3.40.50.300:FF:000113">
    <property type="entry name" value="Preprotein translocase subunit SecA"/>
    <property type="match status" value="1"/>
</dbReference>
<dbReference type="FunFam" id="3.90.1440.10:FF:000001">
    <property type="entry name" value="Preprotein translocase subunit SecA"/>
    <property type="match status" value="1"/>
</dbReference>
<dbReference type="FunFam" id="1.10.3060.10:FF:000003">
    <property type="entry name" value="Protein translocase subunit SecA"/>
    <property type="match status" value="1"/>
</dbReference>
<dbReference type="FunFam" id="3.40.50.300:FF:000334">
    <property type="entry name" value="Protein translocase subunit SecA"/>
    <property type="match status" value="1"/>
</dbReference>
<dbReference type="Gene3D" id="1.10.3060.10">
    <property type="entry name" value="Helical scaffold and wing domains of SecA"/>
    <property type="match status" value="1"/>
</dbReference>
<dbReference type="Gene3D" id="3.40.50.300">
    <property type="entry name" value="P-loop containing nucleotide triphosphate hydrolases"/>
    <property type="match status" value="2"/>
</dbReference>
<dbReference type="Gene3D" id="3.90.1440.10">
    <property type="entry name" value="SecA, preprotein cross-linking domain"/>
    <property type="match status" value="1"/>
</dbReference>
<dbReference type="HAMAP" id="MF_01382">
    <property type="entry name" value="SecA"/>
    <property type="match status" value="1"/>
</dbReference>
<dbReference type="InterPro" id="IPR014001">
    <property type="entry name" value="Helicase_ATP-bd"/>
</dbReference>
<dbReference type="InterPro" id="IPR027417">
    <property type="entry name" value="P-loop_NTPase"/>
</dbReference>
<dbReference type="InterPro" id="IPR004027">
    <property type="entry name" value="SEC_C_motif"/>
</dbReference>
<dbReference type="InterPro" id="IPR000185">
    <property type="entry name" value="SecA"/>
</dbReference>
<dbReference type="InterPro" id="IPR020937">
    <property type="entry name" value="SecA_CS"/>
</dbReference>
<dbReference type="InterPro" id="IPR011115">
    <property type="entry name" value="SecA_DEAD"/>
</dbReference>
<dbReference type="InterPro" id="IPR014018">
    <property type="entry name" value="SecA_motor_DEAD"/>
</dbReference>
<dbReference type="InterPro" id="IPR011130">
    <property type="entry name" value="SecA_preprotein_X-link_dom"/>
</dbReference>
<dbReference type="InterPro" id="IPR044722">
    <property type="entry name" value="SecA_SF2_C"/>
</dbReference>
<dbReference type="InterPro" id="IPR011116">
    <property type="entry name" value="SecA_Wing/Scaffold"/>
</dbReference>
<dbReference type="InterPro" id="IPR036266">
    <property type="entry name" value="SecA_Wing/Scaffold_sf"/>
</dbReference>
<dbReference type="InterPro" id="IPR036670">
    <property type="entry name" value="SecA_X-link_sf"/>
</dbReference>
<dbReference type="NCBIfam" id="NF009538">
    <property type="entry name" value="PRK12904.1"/>
    <property type="match status" value="1"/>
</dbReference>
<dbReference type="NCBIfam" id="TIGR00963">
    <property type="entry name" value="secA"/>
    <property type="match status" value="1"/>
</dbReference>
<dbReference type="PANTHER" id="PTHR30612:SF0">
    <property type="entry name" value="CHLOROPLAST PROTEIN-TRANSPORTING ATPASE"/>
    <property type="match status" value="1"/>
</dbReference>
<dbReference type="PANTHER" id="PTHR30612">
    <property type="entry name" value="SECA INNER MEMBRANE COMPONENT OF SEC PROTEIN SECRETION SYSTEM"/>
    <property type="match status" value="1"/>
</dbReference>
<dbReference type="Pfam" id="PF21090">
    <property type="entry name" value="P-loop_SecA"/>
    <property type="match status" value="1"/>
</dbReference>
<dbReference type="Pfam" id="PF02810">
    <property type="entry name" value="SEC-C"/>
    <property type="match status" value="1"/>
</dbReference>
<dbReference type="Pfam" id="PF07517">
    <property type="entry name" value="SecA_DEAD"/>
    <property type="match status" value="1"/>
</dbReference>
<dbReference type="Pfam" id="PF01043">
    <property type="entry name" value="SecA_PP_bind"/>
    <property type="match status" value="1"/>
</dbReference>
<dbReference type="Pfam" id="PF07516">
    <property type="entry name" value="SecA_SW"/>
    <property type="match status" value="1"/>
</dbReference>
<dbReference type="PRINTS" id="PR00906">
    <property type="entry name" value="SECA"/>
</dbReference>
<dbReference type="SMART" id="SM00957">
    <property type="entry name" value="SecA_DEAD"/>
    <property type="match status" value="1"/>
</dbReference>
<dbReference type="SMART" id="SM00958">
    <property type="entry name" value="SecA_PP_bind"/>
    <property type="match status" value="1"/>
</dbReference>
<dbReference type="SUPFAM" id="SSF81886">
    <property type="entry name" value="Helical scaffold and wing domains of SecA"/>
    <property type="match status" value="1"/>
</dbReference>
<dbReference type="SUPFAM" id="SSF52540">
    <property type="entry name" value="P-loop containing nucleoside triphosphate hydrolases"/>
    <property type="match status" value="2"/>
</dbReference>
<dbReference type="SUPFAM" id="SSF81767">
    <property type="entry name" value="Pre-protein crosslinking domain of SecA"/>
    <property type="match status" value="1"/>
</dbReference>
<dbReference type="PROSITE" id="PS01312">
    <property type="entry name" value="SECA"/>
    <property type="match status" value="1"/>
</dbReference>
<dbReference type="PROSITE" id="PS51196">
    <property type="entry name" value="SECA_MOTOR_DEAD"/>
    <property type="match status" value="1"/>
</dbReference>
<accession>B0BYC1</accession>
<comment type="function">
    <text evidence="1">Part of the Sec protein translocase complex. Interacts with the SecYEG preprotein conducting channel. Has a central role in coupling the hydrolysis of ATP to the transfer of proteins into and across the cell membrane, serving both as a receptor for the preprotein-SecB complex and as an ATP-driven molecular motor driving the stepwise translocation of polypeptide chains across the membrane.</text>
</comment>
<comment type="catalytic activity">
    <reaction evidence="1">
        <text>ATP + H2O + cellular proteinSide 1 = ADP + phosphate + cellular proteinSide 2.</text>
        <dbReference type="EC" id="7.4.2.8"/>
    </reaction>
</comment>
<comment type="cofactor">
    <cofactor evidence="1">
        <name>Zn(2+)</name>
        <dbReference type="ChEBI" id="CHEBI:29105"/>
    </cofactor>
    <text evidence="1">May bind 1 zinc ion per subunit.</text>
</comment>
<comment type="subunit">
    <text evidence="1">Monomer and homodimer. Part of the essential Sec protein translocation apparatus which comprises SecA, SecYEG and auxiliary proteins SecDF-YajC and YidC.</text>
</comment>
<comment type="subcellular location">
    <subcellularLocation>
        <location evidence="1">Cell inner membrane</location>
        <topology evidence="1">Peripheral membrane protein</topology>
        <orientation evidence="1">Cytoplasmic side</orientation>
    </subcellularLocation>
    <subcellularLocation>
        <location evidence="1">Cytoplasm</location>
    </subcellularLocation>
    <text evidence="1">Distribution is 50-50.</text>
</comment>
<comment type="similarity">
    <text evidence="1">Belongs to the SecA family.</text>
</comment>
<proteinExistence type="inferred from homology"/>
<protein>
    <recommendedName>
        <fullName evidence="1">Protein translocase subunit SecA</fullName>
        <ecNumber evidence="1">7.4.2.8</ecNumber>
    </recommendedName>
</protein>